<organism>
    <name type="scientific">Staphylococcus aureus (strain COL)</name>
    <dbReference type="NCBI Taxonomy" id="93062"/>
    <lineage>
        <taxon>Bacteria</taxon>
        <taxon>Bacillati</taxon>
        <taxon>Bacillota</taxon>
        <taxon>Bacilli</taxon>
        <taxon>Bacillales</taxon>
        <taxon>Staphylococcaceae</taxon>
        <taxon>Staphylococcus</taxon>
    </lineage>
</organism>
<feature type="signal peptide" evidence="1">
    <location>
        <begin position="1"/>
        <end position="29"/>
    </location>
</feature>
<feature type="chain" id="PRO_0000066076" description="Uncharacterized leukocidin-like protein 1">
    <location>
        <begin position="30"/>
        <end position="338"/>
    </location>
</feature>
<feature type="sequence conflict" description="In Ref. 2; CAA31770." evidence="3" ref="2">
    <original>GKSQFVVHY</original>
    <variation>SISMRHVRV</variation>
    <location>
        <begin position="272"/>
        <end position="280"/>
    </location>
</feature>
<comment type="induction">
    <text evidence="2">Up-regulated during anaerobic growth.</text>
</comment>
<comment type="similarity">
    <text evidence="3">Belongs to the aerolysin family.</text>
</comment>
<comment type="sequence caution" evidence="3">
    <conflict type="erroneous initiation">
        <sequence resource="EMBL-CDS" id="AAW36973"/>
    </conflict>
</comment>
<sequence>MIKQLCKNITICTLALSTTFTVLPATSFAKINSEIKQVSEKNLDGDTKMYTRTATTSDSQKNITQSLQFNFLTEPNYDKETVFIKAKGTIGSGLRILDPNGYWNSTLRWPGSYSVSIQNVDDNNNTNVTDFAPKNQDESREVKYTYGYKTGGDFSINRGGLTGNITKESNYSETISYQQPSYRTLLDQSTSHKGVGWKVEAHLINNMGHDHTRQLTNDSDNRTKSEIFSLTRNGNLWAKDNFTPKDKMPVTVSEGFNPEFLAVMSHDKKDKGKSQFVVHYKRSMDEFKIDWNRHGFWGYWSGENHVDKKEEKLSALYEVDWKTHNVKFVKVLNDNEKK</sequence>
<keyword id="KW-0732">Signal</keyword>
<evidence type="ECO:0000255" key="1"/>
<evidence type="ECO:0000269" key="2">
    <source>
    </source>
</evidence>
<evidence type="ECO:0000305" key="3"/>
<name>LUKL1_STAAC</name>
<dbReference type="EMBL" id="CP000046">
    <property type="protein sequence ID" value="AAW36973.1"/>
    <property type="status" value="ALT_INIT"/>
    <property type="molecule type" value="Genomic_DNA"/>
</dbReference>
<dbReference type="EMBL" id="X13404">
    <property type="protein sequence ID" value="CAA31770.1"/>
    <property type="molecule type" value="Genomic_DNA"/>
</dbReference>
<dbReference type="PIR" id="S15767">
    <property type="entry name" value="S15767"/>
</dbReference>
<dbReference type="SASBDB" id="P21224"/>
<dbReference type="SMR" id="P21224"/>
<dbReference type="ABCD" id="P21224">
    <property type="antibodies" value="5 sequenced antibodies"/>
</dbReference>
<dbReference type="KEGG" id="sac:SACOL2004"/>
<dbReference type="HOGENOM" id="CLU_055394_1_0_9"/>
<dbReference type="Proteomes" id="UP000000530">
    <property type="component" value="Chromosome"/>
</dbReference>
<dbReference type="GO" id="GO:0005576">
    <property type="term" value="C:extracellular region"/>
    <property type="evidence" value="ECO:0007669"/>
    <property type="project" value="InterPro"/>
</dbReference>
<dbReference type="GO" id="GO:0051715">
    <property type="term" value="P:cytolysis in another organism"/>
    <property type="evidence" value="ECO:0007669"/>
    <property type="project" value="InterPro"/>
</dbReference>
<dbReference type="Gene3D" id="2.70.240.10">
    <property type="entry name" value="Leukocidin/porin MspA"/>
    <property type="match status" value="1"/>
</dbReference>
<dbReference type="InterPro" id="IPR003963">
    <property type="entry name" value="Bi-component_toxin_staph"/>
</dbReference>
<dbReference type="InterPro" id="IPR016183">
    <property type="entry name" value="Leukocidin/Hemolysin_toxin"/>
</dbReference>
<dbReference type="InterPro" id="IPR036435">
    <property type="entry name" value="Leukocidin/porin_MspA_sf"/>
</dbReference>
<dbReference type="NCBIfam" id="TIGR01002">
    <property type="entry name" value="hlyII"/>
    <property type="match status" value="1"/>
</dbReference>
<dbReference type="Pfam" id="PF07968">
    <property type="entry name" value="Leukocidin"/>
    <property type="match status" value="1"/>
</dbReference>
<dbReference type="PRINTS" id="PR01468">
    <property type="entry name" value="BICOMPNTOXIN"/>
</dbReference>
<dbReference type="SUPFAM" id="SSF56959">
    <property type="entry name" value="Leukocidin-like"/>
    <property type="match status" value="1"/>
</dbReference>
<proteinExistence type="evidence at transcript level"/>
<accession>P21224</accession>
<accession>Q5HEI0</accession>
<protein>
    <recommendedName>
        <fullName>Uncharacterized leukocidin-like protein 1</fullName>
    </recommendedName>
</protein>
<reference key="1">
    <citation type="journal article" date="2005" name="J. Bacteriol.">
        <title>Insights on evolution of virulence and resistance from the complete genome analysis of an early methicillin-resistant Staphylococcus aureus strain and a biofilm-producing methicillin-resistant Staphylococcus epidermidis strain.</title>
        <authorList>
            <person name="Gill S.R."/>
            <person name="Fouts D.E."/>
            <person name="Archer G.L."/>
            <person name="Mongodin E.F."/>
            <person name="DeBoy R.T."/>
            <person name="Ravel J."/>
            <person name="Paulsen I.T."/>
            <person name="Kolonay J.F."/>
            <person name="Brinkac L.M."/>
            <person name="Beanan M.J."/>
            <person name="Dodson R.J."/>
            <person name="Daugherty S.C."/>
            <person name="Madupu R."/>
            <person name="Angiuoli S.V."/>
            <person name="Durkin A.S."/>
            <person name="Haft D.H."/>
            <person name="Vamathevan J.J."/>
            <person name="Khouri H."/>
            <person name="Utterback T.R."/>
            <person name="Lee C."/>
            <person name="Dimitrov G."/>
            <person name="Jiang L."/>
            <person name="Qin H."/>
            <person name="Weidman J."/>
            <person name="Tran K."/>
            <person name="Kang K.H."/>
            <person name="Hance I.R."/>
            <person name="Nelson K.E."/>
            <person name="Fraser C.M."/>
        </authorList>
    </citation>
    <scope>NUCLEOTIDE SEQUENCE [LARGE SCALE GENOMIC DNA]</scope>
    <source>
        <strain>COL</strain>
    </source>
</reference>
<reference key="2">
    <citation type="journal article" date="1989" name="Nucleic Acids Res.">
        <title>Nucleotide sequence: the beta-hemolysin gene of Staphylococcus aureus.</title>
        <authorList>
            <person name="Projan S.J."/>
            <person name="Kornblum J."/>
            <person name="Kreiswirth B."/>
            <person name="Moghazeh S.L."/>
            <person name="Eisner W."/>
            <person name="Novick R.P."/>
        </authorList>
    </citation>
    <scope>NUCLEOTIDE SEQUENCE [GENOMIC DNA] OF 272-338</scope>
</reference>
<reference key="3">
    <citation type="journal article" date="2007" name="J. Bacteriol.">
        <title>Anaerobic gene expression in Staphylococcus aureus.</title>
        <authorList>
            <person name="Fuchs S."/>
            <person name="Pane-Farre J."/>
            <person name="Kohler C."/>
            <person name="Hecker M."/>
            <person name="Engelmann S."/>
        </authorList>
    </citation>
    <scope>INDUCTION DURING ANAEROBIC GROWTH</scope>
</reference>
<gene>
    <name type="ordered locus">SACOL2004</name>
</gene>